<comment type="miscellaneous">
    <text evidence="2">Partially overlaps GID8.</text>
</comment>
<comment type="caution">
    <text evidence="3">Product of a dubious gene prediction unlikely to encode a functional protein. Because of that it is not part of the S.cerevisiae S288c complete/reference proteome set.</text>
</comment>
<accession>Q6B0X1</accession>
<organism>
    <name type="scientific">Saccharomyces cerevisiae (strain ATCC 204508 / S288c)</name>
    <name type="common">Baker's yeast</name>
    <dbReference type="NCBI Taxonomy" id="559292"/>
    <lineage>
        <taxon>Eukaryota</taxon>
        <taxon>Fungi</taxon>
        <taxon>Dikarya</taxon>
        <taxon>Ascomycota</taxon>
        <taxon>Saccharomycotina</taxon>
        <taxon>Saccharomycetes</taxon>
        <taxon>Saccharomycetales</taxon>
        <taxon>Saccharomycetaceae</taxon>
        <taxon>Saccharomyces</taxon>
    </lineage>
</organism>
<protein>
    <recommendedName>
        <fullName>Putative uncharacterized protein YMR135W-A</fullName>
    </recommendedName>
</protein>
<feature type="chain" id="PRO_0000299670" description="Putative uncharacterized protein YMR135W-A">
    <location>
        <begin position="1"/>
        <end position="177"/>
    </location>
</feature>
<feature type="region of interest" description="Disordered" evidence="1">
    <location>
        <begin position="122"/>
        <end position="177"/>
    </location>
</feature>
<feature type="compositionally biased region" description="Basic residues" evidence="1">
    <location>
        <begin position="142"/>
        <end position="160"/>
    </location>
</feature>
<feature type="compositionally biased region" description="Basic residues" evidence="1">
    <location>
        <begin position="168"/>
        <end position="177"/>
    </location>
</feature>
<evidence type="ECO:0000256" key="1">
    <source>
        <dbReference type="SAM" id="MobiDB-lite"/>
    </source>
</evidence>
<evidence type="ECO:0000305" key="2"/>
<evidence type="ECO:0000305" key="3">
    <source>
    </source>
</evidence>
<sequence length="177" mass="20384">MAEYLATCSFHSSFVKHFFPYVKSFPPFLPWPLQDPLFVVSLLRVDIVISICYHTQIYLHPADICLYCPFACNLMTKLHMLASRKMMYHQNVSCNEPGHRAGRVRKARSTLIVINSNTMERLPFTRNGSGQQSNKLRDPKKGRTHKPKPSEKHKKNKTGKKGAQEKTHRSRSSRKGN</sequence>
<reference key="1">
    <citation type="journal article" date="1997" name="Nature">
        <title>The nucleotide sequence of Saccharomyces cerevisiae chromosome XIII.</title>
        <authorList>
            <person name="Bowman S."/>
            <person name="Churcher C.M."/>
            <person name="Badcock K."/>
            <person name="Brown D."/>
            <person name="Chillingworth T."/>
            <person name="Connor R."/>
            <person name="Dedman K."/>
            <person name="Devlin K."/>
            <person name="Gentles S."/>
            <person name="Hamlin N."/>
            <person name="Hunt S."/>
            <person name="Jagels K."/>
            <person name="Lye G."/>
            <person name="Moule S."/>
            <person name="Odell C."/>
            <person name="Pearson D."/>
            <person name="Rajandream M.A."/>
            <person name="Rice P."/>
            <person name="Skelton J."/>
            <person name="Walsh S.V."/>
            <person name="Whitehead S."/>
            <person name="Barrell B.G."/>
        </authorList>
    </citation>
    <scope>NUCLEOTIDE SEQUENCE [LARGE SCALE GENOMIC DNA]</scope>
    <source>
        <strain>ATCC 204508 / S288c</strain>
    </source>
</reference>
<reference key="2">
    <citation type="journal article" date="2014" name="G3 (Bethesda)">
        <title>The reference genome sequence of Saccharomyces cerevisiae: Then and now.</title>
        <authorList>
            <person name="Engel S.R."/>
            <person name="Dietrich F.S."/>
            <person name="Fisk D.G."/>
            <person name="Binkley G."/>
            <person name="Balakrishnan R."/>
            <person name="Costanzo M.C."/>
            <person name="Dwight S.S."/>
            <person name="Hitz B.C."/>
            <person name="Karra K."/>
            <person name="Nash R.S."/>
            <person name="Weng S."/>
            <person name="Wong E.D."/>
            <person name="Lloyd P."/>
            <person name="Skrzypek M.S."/>
            <person name="Miyasato S.R."/>
            <person name="Simison M."/>
            <person name="Cherry J.M."/>
        </authorList>
    </citation>
    <scope>GENOME REANNOTATION</scope>
    <source>
        <strain>ATCC 204508 / S288c</strain>
    </source>
</reference>
<reference key="3">
    <citation type="journal article" date="2007" name="Genome Res.">
        <title>Approaching a complete repository of sequence-verified protein-encoding clones for Saccharomyces cerevisiae.</title>
        <authorList>
            <person name="Hu Y."/>
            <person name="Rolfs A."/>
            <person name="Bhullar B."/>
            <person name="Murthy T.V.S."/>
            <person name="Zhu C."/>
            <person name="Berger M.F."/>
            <person name="Camargo A.A."/>
            <person name="Kelley F."/>
            <person name="McCarron S."/>
            <person name="Jepson D."/>
            <person name="Richardson A."/>
            <person name="Raphael J."/>
            <person name="Moreira D."/>
            <person name="Taycher E."/>
            <person name="Zuo D."/>
            <person name="Mohr S."/>
            <person name="Kane M.F."/>
            <person name="Williamson J."/>
            <person name="Simpson A.J.G."/>
            <person name="Bulyk M.L."/>
            <person name="Harlow E."/>
            <person name="Marsischky G."/>
            <person name="Kolodner R.D."/>
            <person name="LaBaer J."/>
        </authorList>
    </citation>
    <scope>NUCLEOTIDE SEQUENCE [GENOMIC DNA]</scope>
    <source>
        <strain>ATCC 204508 / S288c</strain>
    </source>
</reference>
<proteinExistence type="uncertain"/>
<name>YM135_YEAST</name>
<gene>
    <name type="ordered locus">YMR135W-A</name>
</gene>
<dbReference type="EMBL" id="Z47071">
    <property type="status" value="NOT_ANNOTATED_CDS"/>
    <property type="molecule type" value="Genomic_DNA"/>
</dbReference>
<dbReference type="EMBL" id="AY693309">
    <property type="protein sequence ID" value="AAT93328.1"/>
    <property type="molecule type" value="Genomic_DNA"/>
</dbReference>
<dbReference type="IntAct" id="Q6B0X1">
    <property type="interactions" value="2"/>
</dbReference>
<dbReference type="PaxDb" id="4932-YMR135W-A"/>
<dbReference type="EnsemblFungi" id="YMR135W-A_mRNA">
    <property type="protein sequence ID" value="YMR135W-A"/>
    <property type="gene ID" value="YMR135W-A"/>
</dbReference>
<dbReference type="AGR" id="SGD:S000004743"/>
<dbReference type="SGD" id="S000004743">
    <property type="gene designation" value="YMR135W-A"/>
</dbReference>
<dbReference type="HOGENOM" id="CLU_1759858_0_0_1"/>